<comment type="catalytic activity">
    <reaction evidence="1">
        <text>dTMP + ATP = dTDP + ADP</text>
        <dbReference type="Rhea" id="RHEA:13517"/>
        <dbReference type="ChEBI" id="CHEBI:30616"/>
        <dbReference type="ChEBI" id="CHEBI:58369"/>
        <dbReference type="ChEBI" id="CHEBI:63528"/>
        <dbReference type="ChEBI" id="CHEBI:456216"/>
        <dbReference type="EC" id="2.7.4.9"/>
    </reaction>
</comment>
<comment type="similarity">
    <text evidence="1">Belongs to the thymidylate kinase family.</text>
</comment>
<accession>Q4JAC4</accession>
<name>KTHY_SULAC</name>
<proteinExistence type="inferred from homology"/>
<organism>
    <name type="scientific">Sulfolobus acidocaldarius (strain ATCC 33909 / DSM 639 / JCM 8929 / NBRC 15157 / NCIMB 11770)</name>
    <dbReference type="NCBI Taxonomy" id="330779"/>
    <lineage>
        <taxon>Archaea</taxon>
        <taxon>Thermoproteota</taxon>
        <taxon>Thermoprotei</taxon>
        <taxon>Sulfolobales</taxon>
        <taxon>Sulfolobaceae</taxon>
        <taxon>Sulfolobus</taxon>
    </lineage>
</organism>
<dbReference type="EC" id="2.7.4.9" evidence="1"/>
<dbReference type="EMBL" id="CP000077">
    <property type="protein sequence ID" value="AAY80256.1"/>
    <property type="molecule type" value="Genomic_DNA"/>
</dbReference>
<dbReference type="RefSeq" id="WP_011277758.1">
    <property type="nucleotide sequence ID" value="NC_007181.1"/>
</dbReference>
<dbReference type="SMR" id="Q4JAC4"/>
<dbReference type="STRING" id="330779.Saci_0893"/>
<dbReference type="GeneID" id="14551404"/>
<dbReference type="GeneID" id="78441240"/>
<dbReference type="KEGG" id="sai:Saci_0893"/>
<dbReference type="PATRIC" id="fig|330779.12.peg.853"/>
<dbReference type="eggNOG" id="arCOG01891">
    <property type="taxonomic scope" value="Archaea"/>
</dbReference>
<dbReference type="HOGENOM" id="CLU_049131_0_2_2"/>
<dbReference type="Proteomes" id="UP000001018">
    <property type="component" value="Chromosome"/>
</dbReference>
<dbReference type="GO" id="GO:0005737">
    <property type="term" value="C:cytoplasm"/>
    <property type="evidence" value="ECO:0007669"/>
    <property type="project" value="TreeGrafter"/>
</dbReference>
<dbReference type="GO" id="GO:0005524">
    <property type="term" value="F:ATP binding"/>
    <property type="evidence" value="ECO:0007669"/>
    <property type="project" value="UniProtKB-UniRule"/>
</dbReference>
<dbReference type="GO" id="GO:0004798">
    <property type="term" value="F:dTMP kinase activity"/>
    <property type="evidence" value="ECO:0007669"/>
    <property type="project" value="UniProtKB-UniRule"/>
</dbReference>
<dbReference type="GO" id="GO:0006233">
    <property type="term" value="P:dTDP biosynthetic process"/>
    <property type="evidence" value="ECO:0007669"/>
    <property type="project" value="InterPro"/>
</dbReference>
<dbReference type="GO" id="GO:0006235">
    <property type="term" value="P:dTTP biosynthetic process"/>
    <property type="evidence" value="ECO:0007669"/>
    <property type="project" value="UniProtKB-UniRule"/>
</dbReference>
<dbReference type="GO" id="GO:0006227">
    <property type="term" value="P:dUDP biosynthetic process"/>
    <property type="evidence" value="ECO:0007669"/>
    <property type="project" value="TreeGrafter"/>
</dbReference>
<dbReference type="CDD" id="cd01672">
    <property type="entry name" value="TMPK"/>
    <property type="match status" value="1"/>
</dbReference>
<dbReference type="Gene3D" id="3.40.50.300">
    <property type="entry name" value="P-loop containing nucleotide triphosphate hydrolases"/>
    <property type="match status" value="1"/>
</dbReference>
<dbReference type="HAMAP" id="MF_00165">
    <property type="entry name" value="Thymidylate_kinase"/>
    <property type="match status" value="1"/>
</dbReference>
<dbReference type="InterPro" id="IPR027417">
    <property type="entry name" value="P-loop_NTPase"/>
</dbReference>
<dbReference type="InterPro" id="IPR039430">
    <property type="entry name" value="Thymidylate_kin-like_dom"/>
</dbReference>
<dbReference type="InterPro" id="IPR018095">
    <property type="entry name" value="Thymidylate_kin_CS"/>
</dbReference>
<dbReference type="InterPro" id="IPR018094">
    <property type="entry name" value="Thymidylate_kinase"/>
</dbReference>
<dbReference type="NCBIfam" id="TIGR00041">
    <property type="entry name" value="DTMP_kinase"/>
    <property type="match status" value="1"/>
</dbReference>
<dbReference type="PANTHER" id="PTHR10344">
    <property type="entry name" value="THYMIDYLATE KINASE"/>
    <property type="match status" value="1"/>
</dbReference>
<dbReference type="PANTHER" id="PTHR10344:SF4">
    <property type="entry name" value="UMP-CMP KINASE 2, MITOCHONDRIAL"/>
    <property type="match status" value="1"/>
</dbReference>
<dbReference type="Pfam" id="PF02223">
    <property type="entry name" value="Thymidylate_kin"/>
    <property type="match status" value="1"/>
</dbReference>
<dbReference type="SUPFAM" id="SSF52540">
    <property type="entry name" value="P-loop containing nucleoside triphosphate hydrolases"/>
    <property type="match status" value="1"/>
</dbReference>
<dbReference type="PROSITE" id="PS01331">
    <property type="entry name" value="THYMIDYLATE_KINASE"/>
    <property type="match status" value="1"/>
</dbReference>
<feature type="chain" id="PRO_0000155397" description="Probable thymidylate kinase">
    <location>
        <begin position="1"/>
        <end position="194"/>
    </location>
</feature>
<feature type="binding site" evidence="1">
    <location>
        <begin position="8"/>
        <end position="15"/>
    </location>
    <ligand>
        <name>ATP</name>
        <dbReference type="ChEBI" id="CHEBI:30616"/>
    </ligand>
</feature>
<gene>
    <name evidence="1" type="primary">tmk</name>
    <name type="ordered locus">Saci_0893</name>
</gene>
<evidence type="ECO:0000255" key="1">
    <source>
        <dbReference type="HAMAP-Rule" id="MF_00165"/>
    </source>
</evidence>
<sequence length="194" mass="22576">MFIISFEGIDGSGKTTISKIIYEKLLIEIGSNKKIILTSEPFSQEIIKLIEEIGWKDPISLALLFTADRAYHLNLLFKQNPEIIIMDRYIDSTIAYQSSLGIDENWIRNLNKYFPEPDLTILLDLKPETAIARIKNKVDKFNFDEKISTLSKVREKYLELAKRNNKIRIVNAEKSIDEIVEETWSIVYSFLNHF</sequence>
<reference key="1">
    <citation type="journal article" date="2005" name="J. Bacteriol.">
        <title>The genome of Sulfolobus acidocaldarius, a model organism of the Crenarchaeota.</title>
        <authorList>
            <person name="Chen L."/>
            <person name="Bruegger K."/>
            <person name="Skovgaard M."/>
            <person name="Redder P."/>
            <person name="She Q."/>
            <person name="Torarinsson E."/>
            <person name="Greve B."/>
            <person name="Awayez M."/>
            <person name="Zibat A."/>
            <person name="Klenk H.-P."/>
            <person name="Garrett R.A."/>
        </authorList>
    </citation>
    <scope>NUCLEOTIDE SEQUENCE [LARGE SCALE GENOMIC DNA]</scope>
    <source>
        <strain>ATCC 33909 / DSM 639 / JCM 8929 / NBRC 15157 / NCIMB 11770</strain>
    </source>
</reference>
<protein>
    <recommendedName>
        <fullName evidence="1">Probable thymidylate kinase</fullName>
        <ecNumber evidence="1">2.7.4.9</ecNumber>
    </recommendedName>
    <alternativeName>
        <fullName evidence="1">dTMP kinase</fullName>
    </alternativeName>
</protein>
<keyword id="KW-0067">ATP-binding</keyword>
<keyword id="KW-0418">Kinase</keyword>
<keyword id="KW-0545">Nucleotide biosynthesis</keyword>
<keyword id="KW-0547">Nucleotide-binding</keyword>
<keyword id="KW-1185">Reference proteome</keyword>
<keyword id="KW-0808">Transferase</keyword>